<name>S26A5_TURTR</name>
<sequence length="741" mass="80906">MDHVEETEILAATQRYYVERPIFSHPVLQERLHKKDKISESIGDKLKQAFTCTPKKIRNIIYMFLPITKWLPAYRFKEYVLGDIVSGISTGVLQLPQGLAFAMLAAVPPVFGLYSSFYPVIMYCFFGTSRHISIGPFAVISLMIGGVAVRLVPDDIVIPGGVNATNSTEARDALRVKVAMSVTLLTGIIQFCLGVCRFGFVAIYLTEPLVRGFTTAAAVHVFTSMLKYLFGVKTKRYSGIFSVVYSTVAVLQNVKNLNVCSLGVGLMVFGLLLGGKEFNERFKEKLPAPIPLEFFAVVMGTGISAGFSLHESYNVDVVGTLPLGLLPPANPDTSLFHLVYVDAIAIAIVGFSVTISMAKTLANKHGYQVDGNQELIALGLCNSTGSLFQTFAISCSLSRSLVQEGTGGKTQLAGCLASLMILLVILATGFLFESLPQAVLSAIVIVNLKGMFMQFSDLPFFWRTSKIELTIWLTTFVSSLFLGLDYGLITAVIIALMTVIYRTQSPSYIVLGQLPDTDVYIDIDAYEEVKEVPGIKIFQINAPIYYANSDLYSSALKRKTGVNPAFILGARRKAMKKYAKEVGNANMANATVVKVDAEVDAEDGTKPEEEEDEIKYPPIVTKSTLPEELQRFMPPGDNVHTIILDFTQVNFMDSVGVKTLAGIVKEYGDVGIYVYLAGCSAQVVSDLTQNQFFENPALLDLLFHSIHDAVLGSQVREALAEQEATAAPPQEDSEPNATPEA</sequence>
<protein>
    <recommendedName>
        <fullName evidence="10">Prestin</fullName>
    </recommendedName>
    <alternativeName>
        <fullName>Solute carrier family 26 member 5</fullName>
    </alternativeName>
</protein>
<keyword id="KW-0002">3D-structure</keyword>
<keyword id="KW-1003">Cell membrane</keyword>
<keyword id="KW-0133">Cell shape</keyword>
<keyword id="KW-0325">Glycoprotein</keyword>
<keyword id="KW-1009">Hearing</keyword>
<keyword id="KW-0472">Membrane</keyword>
<keyword id="KW-0505">Motor protein</keyword>
<keyword id="KW-1185">Reference proteome</keyword>
<keyword id="KW-0812">Transmembrane</keyword>
<keyword id="KW-1133">Transmembrane helix</keyword>
<comment type="function">
    <text evidence="2 3 4 5 9">Voltage-sensitive motor protein that drives outer hair cell (OHC) electromotility (eM) and participates in sound amplification in the hearing organ (PubMed:34695838). Converts changes in the transmembrane electric potential into mechanical displacements resulting in the coupling of its expansion to movement of a charged voltage sensor across the lipid membrane (PubMed:34695838). The nature of the voltage sensor is not completely clear, and two models compete (By similarity). In the first model, acts as an incomplete transporter where intracellular chloride anion acts as extrinsic voltage sensor that drives conformational change in the protein which is sufficient to produce a length change in the plane of the membrane and hence in the length of the OHC (By similarity). The second model in which multiple charged amino acid residues are distributed at the intracellular and extracellular membrane interfaces that form an intrinsic voltage sensor, whose movement produces the non-linear capacitance (NLC) (By similarity). However, the effective voltage sensor may be the result of a hybrid voltage sensor assembled from intrinsic charge (charged residues) and extrinsic charge (bound anion) (PubMed:34695838). Notably, binding of anions to the anion-binding pocket partially neutralizes the intrinsic positive charge rather than to form an electrically negative sensor, therefore remaining charge may serve as voltage sensor that, after depolarization, moves from down (expanded state) to up (contracted) conformation, which is accompanied by an eccentric contraction of the intermembrane cross-sectional area of the protein as well as a major increase in the hydrophobic thickness of the protein having as consequences the plasma membrane thickening and the cell contraction after membrane depolarization (PubMed:34695838). The anion-binding pocket transits from the inward-open (Down) state, where it is exposed toward the intracellular solvent in the absence of anion, to the occluded (Up) state upon anion binding (By similarity). Salicylate competes for the anion-binding site and inhibits the voltage-sensor movement, and therefore inhibits the charge transfer and electromotility by displacing Cl(-) from the anion-binding site and by preventing the structural transitions to the contracted state (PubMed:34695838). In addition, can act as a weak Cl(-)/HCO3 (-) antiporter across the cell membrane and so regulate the intracellular pH of the outer hair cells (OHCs), while firstly found as being unable to mediate electrogenic anion transport (By similarity). Moreover, supports a role in cardiac mechanical amplification serving as an elastic element to enhance the actomyosin- based sarcomere contraction system (By similarity).</text>
</comment>
<comment type="catalytic activity">
    <reaction evidence="4">
        <text>2 hydrogencarbonate(in) + chloride(out) = 2 hydrogencarbonate(out) + chloride(in)</text>
        <dbReference type="Rhea" id="RHEA:72207"/>
        <dbReference type="ChEBI" id="CHEBI:17544"/>
        <dbReference type="ChEBI" id="CHEBI:17996"/>
    </reaction>
</comment>
<comment type="subunit">
    <text evidence="1 4 9">Homodimer (PubMed:34695838). Interacts (via STAS domain) with CALM; this interaction is calcium-dependent and the STAS domain interacts with only one lobe of CALM which is an elongated conformation (By similarity).</text>
</comment>
<comment type="subcellular location">
    <subcellularLocation>
        <location evidence="9">Cell membrane</location>
        <topology evidence="6">Multi-pass membrane protein</topology>
    </subcellularLocation>
</comment>
<comment type="domain">
    <text evidence="2 4 5 9">The STAS domain mediates dimerization, with both STAS domains latched onto each other in a domain-swapped manner (PubMed:34695838). The N-terminus domain is involved in dimerization such that each N-terminus domain embraces both STAS domains (By similarity). The STAS domain harbors a unique anion-binding site important for the fine regulation of the high-frequency electromotile properties (By similarity). The transmembrane domain consists of 14 transmembrane segments organized a 7(+)7 inverted repeat architecture that can be divided into two main helix bundles, the ''core'' domain and the ''gate'' domain (PubMed:34695838). The transmembrane regions are domain-swapped with the STAS domain containing N- and C-terminal cytoplasmic domains (PubMed:34695838). The STAS domain mediates CALM binding CALM (By similarity).</text>
</comment>
<comment type="similarity">
    <text evidence="11">Belongs to the SLC26A/SulP transporter (TC 2.A.53) family.</text>
</comment>
<gene>
    <name evidence="2" type="primary">SLC26A5</name>
</gene>
<evidence type="ECO:0000250" key="1">
    <source>
        <dbReference type="UniProtKB" id="A0FKN5"/>
    </source>
</evidence>
<evidence type="ECO:0000250" key="2">
    <source>
        <dbReference type="UniProtKB" id="P58743"/>
    </source>
</evidence>
<evidence type="ECO:0000250" key="3">
    <source>
        <dbReference type="UniProtKB" id="Q99NH7"/>
    </source>
</evidence>
<evidence type="ECO:0000250" key="4">
    <source>
        <dbReference type="UniProtKB" id="Q9EPH0"/>
    </source>
</evidence>
<evidence type="ECO:0000250" key="5">
    <source>
        <dbReference type="UniProtKB" id="Q9JKQ2"/>
    </source>
</evidence>
<evidence type="ECO:0000255" key="6"/>
<evidence type="ECO:0000255" key="7">
    <source>
        <dbReference type="PROSITE-ProRule" id="PRU00198"/>
    </source>
</evidence>
<evidence type="ECO:0000256" key="8">
    <source>
        <dbReference type="SAM" id="MobiDB-lite"/>
    </source>
</evidence>
<evidence type="ECO:0000269" key="9">
    <source>
    </source>
</evidence>
<evidence type="ECO:0000303" key="10">
    <source>
    </source>
</evidence>
<evidence type="ECO:0000305" key="11"/>
<evidence type="ECO:0000305" key="12">
    <source>
    </source>
</evidence>
<evidence type="ECO:0007744" key="13">
    <source>
        <dbReference type="PDB" id="7S8X"/>
    </source>
</evidence>
<evidence type="ECO:0007744" key="14">
    <source>
        <dbReference type="PDB" id="7S9A"/>
    </source>
</evidence>
<evidence type="ECO:0007744" key="15">
    <source>
        <dbReference type="PDB" id="7S9B"/>
    </source>
</evidence>
<evidence type="ECO:0007744" key="16">
    <source>
        <dbReference type="PDB" id="7S9C"/>
    </source>
</evidence>
<evidence type="ECO:0007744" key="17">
    <source>
        <dbReference type="PDB" id="7S9D"/>
    </source>
</evidence>
<evidence type="ECO:0007744" key="18">
    <source>
        <dbReference type="PDB" id="7S9E"/>
    </source>
</evidence>
<evidence type="ECO:0007829" key="19">
    <source>
        <dbReference type="PDB" id="7S8X"/>
    </source>
</evidence>
<accession>D7PC76</accession>
<proteinExistence type="evidence at protein level"/>
<organism>
    <name type="scientific">Tursiops truncatus</name>
    <name type="common">Atlantic bottle-nosed dolphin</name>
    <name type="synonym">Delphinus truncatus</name>
    <dbReference type="NCBI Taxonomy" id="9739"/>
    <lineage>
        <taxon>Eukaryota</taxon>
        <taxon>Metazoa</taxon>
        <taxon>Chordata</taxon>
        <taxon>Craniata</taxon>
        <taxon>Vertebrata</taxon>
        <taxon>Euteleostomi</taxon>
        <taxon>Mammalia</taxon>
        <taxon>Eutheria</taxon>
        <taxon>Laurasiatheria</taxon>
        <taxon>Artiodactyla</taxon>
        <taxon>Whippomorpha</taxon>
        <taxon>Cetacea</taxon>
        <taxon>Odontoceti</taxon>
        <taxon>Delphinidae</taxon>
        <taxon>Tursiops</taxon>
    </lineage>
</organism>
<dbReference type="EMBL" id="GU217587">
    <property type="protein sequence ID" value="ADI59756.1"/>
    <property type="molecule type" value="Genomic_DNA"/>
</dbReference>
<dbReference type="RefSeq" id="XP_004320315.1">
    <property type="nucleotide sequence ID" value="XM_004320267.3"/>
</dbReference>
<dbReference type="PDB" id="7S8X">
    <property type="method" value="EM"/>
    <property type="resolution" value="3.30 A"/>
    <property type="chains" value="A/B=1-741"/>
</dbReference>
<dbReference type="PDB" id="7S9A">
    <property type="method" value="EM"/>
    <property type="resolution" value="3.80 A"/>
    <property type="chains" value="A/B=1-741"/>
</dbReference>
<dbReference type="PDB" id="7S9B">
    <property type="method" value="EM"/>
    <property type="resolution" value="4.20 A"/>
    <property type="chains" value="A/B=1-741"/>
</dbReference>
<dbReference type="PDB" id="7S9C">
    <property type="method" value="EM"/>
    <property type="resolution" value="6.70 A"/>
    <property type="chains" value="A/B=1-741"/>
</dbReference>
<dbReference type="PDB" id="7S9D">
    <property type="method" value="EM"/>
    <property type="resolution" value="4.60 A"/>
    <property type="chains" value="A/B=1-741"/>
</dbReference>
<dbReference type="PDB" id="7S9E">
    <property type="method" value="EM"/>
    <property type="resolution" value="3.70 A"/>
    <property type="chains" value="A/B=1-741"/>
</dbReference>
<dbReference type="PDB" id="8UC1">
    <property type="method" value="EM"/>
    <property type="resolution" value="3.40 A"/>
    <property type="chains" value="A/B=1-741"/>
</dbReference>
<dbReference type="PDBsum" id="7S8X"/>
<dbReference type="PDBsum" id="7S9A"/>
<dbReference type="PDBsum" id="7S9B"/>
<dbReference type="PDBsum" id="7S9C"/>
<dbReference type="PDBsum" id="7S9D"/>
<dbReference type="PDBsum" id="7S9E"/>
<dbReference type="PDBsum" id="8UC1"/>
<dbReference type="EMDB" id="EMD-24928"/>
<dbReference type="EMDB" id="EMD-24930"/>
<dbReference type="EMDB" id="EMD-24931"/>
<dbReference type="EMDB" id="EMD-24932"/>
<dbReference type="EMDB" id="EMD-24933"/>
<dbReference type="EMDB" id="EMD-24934"/>
<dbReference type="EMDB" id="EMD-42112"/>
<dbReference type="SMR" id="D7PC76"/>
<dbReference type="FunCoup" id="D7PC76">
    <property type="interactions" value="174"/>
</dbReference>
<dbReference type="STRING" id="9739.ENSTTRP00000010148"/>
<dbReference type="GeneID" id="101316391"/>
<dbReference type="CTD" id="375611"/>
<dbReference type="OrthoDB" id="288203at2759"/>
<dbReference type="Proteomes" id="UP000245320">
    <property type="component" value="Chromosome 9"/>
</dbReference>
<dbReference type="GO" id="GO:0005886">
    <property type="term" value="C:plasma membrane"/>
    <property type="evidence" value="ECO:0007669"/>
    <property type="project" value="UniProtKB-SubCell"/>
</dbReference>
<dbReference type="GO" id="GO:0008271">
    <property type="term" value="F:secondary active sulfate transmembrane transporter activity"/>
    <property type="evidence" value="ECO:0007669"/>
    <property type="project" value="InterPro"/>
</dbReference>
<dbReference type="GO" id="GO:0099129">
    <property type="term" value="P:cochlear outer hair cell electromotile response"/>
    <property type="evidence" value="ECO:0000314"/>
    <property type="project" value="UniProtKB"/>
</dbReference>
<dbReference type="GO" id="GO:0008360">
    <property type="term" value="P:regulation of cell shape"/>
    <property type="evidence" value="ECO:0007669"/>
    <property type="project" value="UniProtKB-KW"/>
</dbReference>
<dbReference type="GO" id="GO:0007605">
    <property type="term" value="P:sensory perception of sound"/>
    <property type="evidence" value="ECO:0007669"/>
    <property type="project" value="UniProtKB-KW"/>
</dbReference>
<dbReference type="CDD" id="cd07043">
    <property type="entry name" value="STAS_anti-anti-sigma_factors"/>
    <property type="match status" value="1"/>
</dbReference>
<dbReference type="CDD" id="cd07042">
    <property type="entry name" value="STAS_SulP_like_sulfate_transporter"/>
    <property type="match status" value="1"/>
</dbReference>
<dbReference type="Gene3D" id="3.30.750.24">
    <property type="entry name" value="STAS domain"/>
    <property type="match status" value="1"/>
</dbReference>
<dbReference type="InterPro" id="IPR018045">
    <property type="entry name" value="S04_transporter_CS"/>
</dbReference>
<dbReference type="InterPro" id="IPR011547">
    <property type="entry name" value="SLC26A/SulP_dom"/>
</dbReference>
<dbReference type="InterPro" id="IPR001902">
    <property type="entry name" value="SLC26A/SulP_fam"/>
</dbReference>
<dbReference type="InterPro" id="IPR002645">
    <property type="entry name" value="STAS_dom"/>
</dbReference>
<dbReference type="InterPro" id="IPR036513">
    <property type="entry name" value="STAS_dom_sf"/>
</dbReference>
<dbReference type="NCBIfam" id="TIGR00815">
    <property type="entry name" value="sulP"/>
    <property type="match status" value="1"/>
</dbReference>
<dbReference type="PANTHER" id="PTHR11814">
    <property type="entry name" value="SULFATE TRANSPORTER"/>
    <property type="match status" value="1"/>
</dbReference>
<dbReference type="Pfam" id="PF01740">
    <property type="entry name" value="STAS"/>
    <property type="match status" value="1"/>
</dbReference>
<dbReference type="Pfam" id="PF00916">
    <property type="entry name" value="Sulfate_transp"/>
    <property type="match status" value="1"/>
</dbReference>
<dbReference type="SUPFAM" id="SSF52091">
    <property type="entry name" value="SpoIIaa-like"/>
    <property type="match status" value="1"/>
</dbReference>
<dbReference type="PROSITE" id="PS01130">
    <property type="entry name" value="SLC26A"/>
    <property type="match status" value="1"/>
</dbReference>
<dbReference type="PROSITE" id="PS50801">
    <property type="entry name" value="STAS"/>
    <property type="match status" value="1"/>
</dbReference>
<feature type="chain" id="PRO_0000458477" description="Prestin">
    <location>
        <begin position="1"/>
        <end position="741"/>
    </location>
</feature>
<feature type="topological domain" description="Cytoplasmic" evidence="9 13">
    <location>
        <begin position="1"/>
        <end position="79"/>
    </location>
</feature>
<feature type="transmembrane region" description="Helical; Name=1" evidence="9 13">
    <location>
        <begin position="80"/>
        <end position="105"/>
    </location>
</feature>
<feature type="topological domain" description="Extracellular" evidence="12">
    <location>
        <begin position="106"/>
        <end position="109"/>
    </location>
</feature>
<feature type="transmembrane region" description="Helical; Name=2" evidence="9 13">
    <location>
        <begin position="110"/>
        <end position="125"/>
    </location>
</feature>
<feature type="topological domain" description="Cytoplasmic" evidence="12">
    <location>
        <begin position="126"/>
        <end position="137"/>
    </location>
</feature>
<feature type="transmembrane region" description="Helical; Name=3" evidence="9 13">
    <location>
        <begin position="138"/>
        <end position="147"/>
    </location>
</feature>
<feature type="topological domain" description="Extracellular" evidence="12">
    <location>
        <begin position="148"/>
        <end position="178"/>
    </location>
</feature>
<feature type="transmembrane region" description="Helical; Name=4" evidence="9 13">
    <location>
        <begin position="179"/>
        <end position="208"/>
    </location>
</feature>
<feature type="transmembrane region" description="Helical; Name=5a" evidence="9 13">
    <location>
        <begin position="209"/>
        <end position="230"/>
    </location>
</feature>
<feature type="topological domain" description="Extracellular" evidence="12">
    <location>
        <begin position="231"/>
        <end position="243"/>
    </location>
</feature>
<feature type="intramembrane region" description="Helical; Name=5b" evidence="9 13">
    <location>
        <begin position="244"/>
        <end position="248"/>
    </location>
</feature>
<feature type="topological domain" description="Extracellular" evidence="12">
    <location>
        <begin position="249"/>
        <end position="261"/>
    </location>
</feature>
<feature type="transmembrane region" description="Helical; Name=6" evidence="9 13">
    <location>
        <begin position="262"/>
        <end position="283"/>
    </location>
</feature>
<feature type="topological domain" description="Cytoplasmic" evidence="12">
    <location>
        <begin position="284"/>
        <end position="291"/>
    </location>
</feature>
<feature type="transmembrane region" description="Helical; Name=7" evidence="9 13">
    <location>
        <begin position="292"/>
        <end position="303"/>
    </location>
</feature>
<feature type="topological domain" description="Extracellular" evidence="12">
    <location>
        <begin position="304"/>
        <end position="338"/>
    </location>
</feature>
<feature type="transmembrane region" description="Helical; Name=8" evidence="9 13">
    <location>
        <begin position="339"/>
        <end position="361"/>
    </location>
</feature>
<feature type="topological domain" description="Cytoplasmic" evidence="12">
    <location>
        <begin position="362"/>
        <end position="370"/>
    </location>
</feature>
<feature type="transmembrane region" description="Helical; Name=9" evidence="9 13">
    <location>
        <begin position="371"/>
        <end position="388"/>
    </location>
</feature>
<feature type="topological domain" description="Extracellular" evidence="12">
    <location>
        <begin position="389"/>
        <end position="396"/>
    </location>
</feature>
<feature type="transmembrane region" description="Helical; Name=10" evidence="9 13">
    <location>
        <begin position="397"/>
        <end position="406"/>
    </location>
</feature>
<feature type="topological domain" description="Cytoplasmic" evidence="12">
    <location>
        <begin position="407"/>
        <end position="410"/>
    </location>
</feature>
<feature type="transmembrane region" description="Helical; Name=11" evidence="9 13">
    <location>
        <begin position="411"/>
        <end position="429"/>
    </location>
</feature>
<feature type="topological domain" description="Extracellular" evidence="12">
    <location>
        <begin position="430"/>
        <end position="436"/>
    </location>
</feature>
<feature type="transmembrane region" description="Helical; Name=12" evidence="9 13">
    <location>
        <begin position="437"/>
        <end position="459"/>
    </location>
</feature>
<feature type="topological domain" description="Cytoplasmic" evidence="12">
    <location>
        <begin position="460"/>
        <end position="467"/>
    </location>
</feature>
<feature type="transmembrane region" description="Helical; Name=13" evidence="9 13">
    <location>
        <begin position="468"/>
        <end position="483"/>
    </location>
</feature>
<feature type="topological domain" description="Extracellular" evidence="12">
    <location>
        <position position="484"/>
    </location>
</feature>
<feature type="transmembrane region" description="Helical; Name=14" evidence="9 13">
    <location>
        <begin position="485"/>
        <end position="498"/>
    </location>
</feature>
<feature type="topological domain" description="Cytoplasmic" evidence="9 13">
    <location>
        <begin position="499"/>
        <end position="741"/>
    </location>
</feature>
<feature type="domain" description="STAS" evidence="7">
    <location>
        <begin position="525"/>
        <end position="713"/>
    </location>
</feature>
<feature type="region of interest" description="Extended region for STAS domain" evidence="4">
    <location>
        <begin position="505"/>
        <end position="718"/>
    </location>
</feature>
<feature type="region of interest" description="Disordered" evidence="8">
    <location>
        <begin position="718"/>
        <end position="741"/>
    </location>
</feature>
<feature type="short sequence motif" description="Involved in motor function" evidence="5">
    <location>
        <begin position="158"/>
        <end position="168"/>
    </location>
</feature>
<feature type="compositionally biased region" description="Low complexity" evidence="8">
    <location>
        <begin position="721"/>
        <end position="730"/>
    </location>
</feature>
<feature type="binding site" evidence="9 18">
    <location>
        <position position="398"/>
    </location>
    <ligand>
        <name>salicylate</name>
        <dbReference type="ChEBI" id="CHEBI:30762"/>
        <note>antagonist</note>
    </ligand>
</feature>
<feature type="site" description="Controls the electromotile activity" evidence="1 4">
    <location>
        <position position="398"/>
    </location>
</feature>
<feature type="site" description="Contributes to anion binding" evidence="4">
    <location>
        <position position="399"/>
    </location>
</feature>
<feature type="glycosylation site" description="N-linked (GlcNAc...) asparagine" evidence="6">
    <location>
        <position position="163"/>
    </location>
</feature>
<feature type="glycosylation site" description="N-linked (GlcNAc...) asparagine" evidence="6">
    <location>
        <position position="166"/>
    </location>
</feature>
<feature type="mutagenesis site" description="Abolishes non-linear capacitance. Does not affect protein expression." evidence="9">
    <original>GG</original>
    <variation>LV</variation>
    <location>
        <begin position="274"/>
        <end position="275"/>
    </location>
</feature>
<feature type="helix" evidence="19">
    <location>
        <begin position="25"/>
        <end position="31"/>
    </location>
</feature>
<feature type="helix" evidence="19">
    <location>
        <begin position="45"/>
        <end position="48"/>
    </location>
</feature>
<feature type="helix" evidence="19">
    <location>
        <begin position="54"/>
        <end position="64"/>
    </location>
</feature>
<feature type="helix" evidence="19">
    <location>
        <begin position="67"/>
        <end position="70"/>
    </location>
</feature>
<feature type="turn" evidence="19">
    <location>
        <begin position="71"/>
        <end position="73"/>
    </location>
</feature>
<feature type="helix" evidence="19">
    <location>
        <begin position="76"/>
        <end position="104"/>
    </location>
</feature>
<feature type="helix" evidence="19">
    <location>
        <begin position="110"/>
        <end position="126"/>
    </location>
</feature>
<feature type="helix" evidence="19">
    <location>
        <begin position="138"/>
        <end position="151"/>
    </location>
</feature>
<feature type="helix" evidence="19">
    <location>
        <begin position="168"/>
        <end position="195"/>
    </location>
</feature>
<feature type="helix" evidence="19">
    <location>
        <begin position="198"/>
        <end position="203"/>
    </location>
</feature>
<feature type="helix" evidence="19">
    <location>
        <begin position="207"/>
        <end position="229"/>
    </location>
</feature>
<feature type="helix" evidence="19">
    <location>
        <begin position="242"/>
        <end position="252"/>
    </location>
</feature>
<feature type="helix" evidence="19">
    <location>
        <begin position="259"/>
        <end position="281"/>
    </location>
</feature>
<feature type="helix" evidence="19">
    <location>
        <begin position="292"/>
        <end position="306"/>
    </location>
</feature>
<feature type="helix" evidence="19">
    <location>
        <begin position="309"/>
        <end position="312"/>
    </location>
</feature>
<feature type="helix" evidence="19">
    <location>
        <begin position="336"/>
        <end position="365"/>
    </location>
</feature>
<feature type="helix" evidence="19">
    <location>
        <begin position="371"/>
        <end position="387"/>
    </location>
</feature>
<feature type="helix" evidence="19">
    <location>
        <begin position="397"/>
        <end position="406"/>
    </location>
</feature>
<feature type="helix" evidence="19">
    <location>
        <begin position="412"/>
        <end position="426"/>
    </location>
</feature>
<feature type="helix" evidence="19">
    <location>
        <begin position="431"/>
        <end position="433"/>
    </location>
</feature>
<feature type="helix" evidence="19">
    <location>
        <begin position="437"/>
        <end position="447"/>
    </location>
</feature>
<feature type="helix" evidence="19">
    <location>
        <begin position="449"/>
        <end position="452"/>
    </location>
</feature>
<feature type="helix" evidence="19">
    <location>
        <begin position="453"/>
        <end position="456"/>
    </location>
</feature>
<feature type="helix" evidence="19">
    <location>
        <begin position="457"/>
        <end position="464"/>
    </location>
</feature>
<feature type="helix" evidence="19">
    <location>
        <begin position="466"/>
        <end position="481"/>
    </location>
</feature>
<feature type="helix" evidence="19">
    <location>
        <begin position="484"/>
        <end position="504"/>
    </location>
</feature>
<feature type="strand" evidence="19">
    <location>
        <begin position="509"/>
        <end position="513"/>
    </location>
</feature>
<feature type="strand" evidence="19">
    <location>
        <begin position="520"/>
        <end position="522"/>
    </location>
</feature>
<feature type="helix" evidence="19">
    <location>
        <begin position="523"/>
        <end position="526"/>
    </location>
</feature>
<feature type="strand" evidence="19">
    <location>
        <begin position="535"/>
        <end position="539"/>
    </location>
</feature>
<feature type="turn" evidence="19">
    <location>
        <begin position="546"/>
        <end position="548"/>
    </location>
</feature>
<feature type="helix" evidence="19">
    <location>
        <begin position="549"/>
        <end position="559"/>
    </location>
</feature>
<feature type="helix" evidence="19">
    <location>
        <begin position="564"/>
        <end position="577"/>
    </location>
</feature>
<feature type="strand" evidence="19">
    <location>
        <begin position="641"/>
        <end position="645"/>
    </location>
</feature>
<feature type="helix" evidence="19">
    <location>
        <begin position="654"/>
        <end position="670"/>
    </location>
</feature>
<feature type="strand" evidence="19">
    <location>
        <begin position="673"/>
        <end position="678"/>
    </location>
</feature>
<feature type="helix" evidence="19">
    <location>
        <begin position="681"/>
        <end position="689"/>
    </location>
</feature>
<feature type="turn" evidence="19">
    <location>
        <begin position="690"/>
        <end position="692"/>
    </location>
</feature>
<feature type="strand" evidence="19">
    <location>
        <begin position="694"/>
        <end position="696"/>
    </location>
</feature>
<feature type="turn" evidence="19">
    <location>
        <begin position="697"/>
        <end position="700"/>
    </location>
</feature>
<feature type="strand" evidence="19">
    <location>
        <begin position="701"/>
        <end position="705"/>
    </location>
</feature>
<feature type="helix" evidence="19">
    <location>
        <begin position="706"/>
        <end position="720"/>
    </location>
</feature>
<reference key="1">
    <citation type="journal article" date="2010" name="Curr. Biol.">
        <title>The hearing gene Prestin unites echolocating bats and whales.</title>
        <authorList>
            <person name="Li Y."/>
            <person name="Liu Z."/>
            <person name="Shi P."/>
            <person name="Zhang J."/>
        </authorList>
    </citation>
    <scope>NUCLEOTIDE SEQUENCE [GENOMIC DNA]</scope>
</reference>
<reference evidence="13 14 15 16 17 18" key="2">
    <citation type="journal article" date="2021" name="Nature">
        <title>The conformational cycle of prestin underlies outer-hair cell electromotility.</title>
        <authorList>
            <person name="Bavi N."/>
            <person name="Clark M.D."/>
            <person name="Contreras G.F."/>
            <person name="Shen R."/>
            <person name="Reddy B.G."/>
            <person name="Milewski W."/>
            <person name="Perozo E."/>
        </authorList>
    </citation>
    <scope>STRUCTURE BY ELECTRON MICROSCOPY (3.30 ANGSTROMS) IN COMPLEX WITH SALICYLATE</scope>
    <scope>FUNCTION</scope>
    <scope>TOPOLOGY</scope>
    <scope>SUBUNIT</scope>
    <scope>DOMAIN</scope>
    <scope>SUBCELLULAR LOCATION</scope>
    <scope>MUTAGENESIS OF 274-GLY-GLY-275</scope>
</reference>